<name>RS13_NOCSJ</name>
<organism>
    <name type="scientific">Nocardioides sp. (strain ATCC BAA-499 / JS614)</name>
    <dbReference type="NCBI Taxonomy" id="196162"/>
    <lineage>
        <taxon>Bacteria</taxon>
        <taxon>Bacillati</taxon>
        <taxon>Actinomycetota</taxon>
        <taxon>Actinomycetes</taxon>
        <taxon>Propionibacteriales</taxon>
        <taxon>Nocardioidaceae</taxon>
        <taxon>Nocardioides</taxon>
    </lineage>
</organism>
<evidence type="ECO:0000255" key="1">
    <source>
        <dbReference type="HAMAP-Rule" id="MF_01315"/>
    </source>
</evidence>
<evidence type="ECO:0000256" key="2">
    <source>
        <dbReference type="SAM" id="MobiDB-lite"/>
    </source>
</evidence>
<evidence type="ECO:0000305" key="3"/>
<accession>A1SNJ1</accession>
<sequence>MARLVGVDLPRDKRIEIALTYIYGIGRTRAQQVLEATGVNPDLRVHQLGDEELVKLRDEIEANFKIEGDLRREVQADIRRKIEIGSYQGRRHRQGLPVRGQRTKTNARTRKGPKRTVAGKKKAK</sequence>
<proteinExistence type="inferred from homology"/>
<protein>
    <recommendedName>
        <fullName evidence="1">Small ribosomal subunit protein uS13</fullName>
    </recommendedName>
    <alternativeName>
        <fullName evidence="3">30S ribosomal protein S13</fullName>
    </alternativeName>
</protein>
<keyword id="KW-1185">Reference proteome</keyword>
<keyword id="KW-0687">Ribonucleoprotein</keyword>
<keyword id="KW-0689">Ribosomal protein</keyword>
<keyword id="KW-0694">RNA-binding</keyword>
<keyword id="KW-0699">rRNA-binding</keyword>
<keyword id="KW-0820">tRNA-binding</keyword>
<dbReference type="EMBL" id="CP000509">
    <property type="protein sequence ID" value="ABL83376.1"/>
    <property type="status" value="ALT_INIT"/>
    <property type="molecule type" value="Genomic_DNA"/>
</dbReference>
<dbReference type="RefSeq" id="WP_011757307.1">
    <property type="nucleotide sequence ID" value="NC_008699.1"/>
</dbReference>
<dbReference type="SMR" id="A1SNJ1"/>
<dbReference type="STRING" id="196162.Noca_3878"/>
<dbReference type="KEGG" id="nca:Noca_3878"/>
<dbReference type="eggNOG" id="COG0099">
    <property type="taxonomic scope" value="Bacteria"/>
</dbReference>
<dbReference type="HOGENOM" id="CLU_103849_1_2_11"/>
<dbReference type="OrthoDB" id="9803610at2"/>
<dbReference type="Proteomes" id="UP000000640">
    <property type="component" value="Chromosome"/>
</dbReference>
<dbReference type="GO" id="GO:0005829">
    <property type="term" value="C:cytosol"/>
    <property type="evidence" value="ECO:0007669"/>
    <property type="project" value="TreeGrafter"/>
</dbReference>
<dbReference type="GO" id="GO:0015935">
    <property type="term" value="C:small ribosomal subunit"/>
    <property type="evidence" value="ECO:0007669"/>
    <property type="project" value="TreeGrafter"/>
</dbReference>
<dbReference type="GO" id="GO:0019843">
    <property type="term" value="F:rRNA binding"/>
    <property type="evidence" value="ECO:0007669"/>
    <property type="project" value="UniProtKB-UniRule"/>
</dbReference>
<dbReference type="GO" id="GO:0003735">
    <property type="term" value="F:structural constituent of ribosome"/>
    <property type="evidence" value="ECO:0007669"/>
    <property type="project" value="InterPro"/>
</dbReference>
<dbReference type="GO" id="GO:0000049">
    <property type="term" value="F:tRNA binding"/>
    <property type="evidence" value="ECO:0007669"/>
    <property type="project" value="UniProtKB-UniRule"/>
</dbReference>
<dbReference type="GO" id="GO:0006412">
    <property type="term" value="P:translation"/>
    <property type="evidence" value="ECO:0007669"/>
    <property type="project" value="UniProtKB-UniRule"/>
</dbReference>
<dbReference type="FunFam" id="1.10.8.50:FF:000001">
    <property type="entry name" value="30S ribosomal protein S13"/>
    <property type="match status" value="1"/>
</dbReference>
<dbReference type="FunFam" id="4.10.910.10:FF:000001">
    <property type="entry name" value="30S ribosomal protein S13"/>
    <property type="match status" value="1"/>
</dbReference>
<dbReference type="Gene3D" id="1.10.8.50">
    <property type="match status" value="1"/>
</dbReference>
<dbReference type="Gene3D" id="4.10.910.10">
    <property type="entry name" value="30s ribosomal protein s13, domain 2"/>
    <property type="match status" value="1"/>
</dbReference>
<dbReference type="HAMAP" id="MF_01315">
    <property type="entry name" value="Ribosomal_uS13"/>
    <property type="match status" value="1"/>
</dbReference>
<dbReference type="InterPro" id="IPR027437">
    <property type="entry name" value="Rbsml_uS13_C"/>
</dbReference>
<dbReference type="InterPro" id="IPR001892">
    <property type="entry name" value="Ribosomal_uS13"/>
</dbReference>
<dbReference type="InterPro" id="IPR010979">
    <property type="entry name" value="Ribosomal_uS13-like_H2TH"/>
</dbReference>
<dbReference type="InterPro" id="IPR019980">
    <property type="entry name" value="Ribosomal_uS13_bac-type"/>
</dbReference>
<dbReference type="InterPro" id="IPR018269">
    <property type="entry name" value="Ribosomal_uS13_CS"/>
</dbReference>
<dbReference type="NCBIfam" id="TIGR03631">
    <property type="entry name" value="uS13_bact"/>
    <property type="match status" value="1"/>
</dbReference>
<dbReference type="PANTHER" id="PTHR10871">
    <property type="entry name" value="30S RIBOSOMAL PROTEIN S13/40S RIBOSOMAL PROTEIN S18"/>
    <property type="match status" value="1"/>
</dbReference>
<dbReference type="PANTHER" id="PTHR10871:SF1">
    <property type="entry name" value="SMALL RIBOSOMAL SUBUNIT PROTEIN US13M"/>
    <property type="match status" value="1"/>
</dbReference>
<dbReference type="Pfam" id="PF00416">
    <property type="entry name" value="Ribosomal_S13"/>
    <property type="match status" value="1"/>
</dbReference>
<dbReference type="PIRSF" id="PIRSF002134">
    <property type="entry name" value="Ribosomal_S13"/>
    <property type="match status" value="1"/>
</dbReference>
<dbReference type="SUPFAM" id="SSF46946">
    <property type="entry name" value="S13-like H2TH domain"/>
    <property type="match status" value="1"/>
</dbReference>
<dbReference type="PROSITE" id="PS00646">
    <property type="entry name" value="RIBOSOMAL_S13_1"/>
    <property type="match status" value="1"/>
</dbReference>
<dbReference type="PROSITE" id="PS50159">
    <property type="entry name" value="RIBOSOMAL_S13_2"/>
    <property type="match status" value="1"/>
</dbReference>
<feature type="chain" id="PRO_0000306664" description="Small ribosomal subunit protein uS13">
    <location>
        <begin position="1"/>
        <end position="124"/>
    </location>
</feature>
<feature type="region of interest" description="Disordered" evidence="2">
    <location>
        <begin position="89"/>
        <end position="124"/>
    </location>
</feature>
<feature type="compositionally biased region" description="Basic residues" evidence="2">
    <location>
        <begin position="101"/>
        <end position="124"/>
    </location>
</feature>
<reference key="1">
    <citation type="submission" date="2006-12" db="EMBL/GenBank/DDBJ databases">
        <title>Complete sequence of chromosome 1 of Nocardioides sp. JS614.</title>
        <authorList>
            <person name="Copeland A."/>
            <person name="Lucas S."/>
            <person name="Lapidus A."/>
            <person name="Barry K."/>
            <person name="Detter J.C."/>
            <person name="Glavina del Rio T."/>
            <person name="Hammon N."/>
            <person name="Israni S."/>
            <person name="Dalin E."/>
            <person name="Tice H."/>
            <person name="Pitluck S."/>
            <person name="Thompson L.S."/>
            <person name="Brettin T."/>
            <person name="Bruce D."/>
            <person name="Han C."/>
            <person name="Tapia R."/>
            <person name="Schmutz J."/>
            <person name="Larimer F."/>
            <person name="Land M."/>
            <person name="Hauser L."/>
            <person name="Kyrpides N."/>
            <person name="Kim E."/>
            <person name="Mattes T."/>
            <person name="Gossett J."/>
            <person name="Richardson P."/>
        </authorList>
    </citation>
    <scope>NUCLEOTIDE SEQUENCE [LARGE SCALE GENOMIC DNA]</scope>
    <source>
        <strain>ATCC BAA-499 / JS614</strain>
    </source>
</reference>
<comment type="function">
    <text evidence="1">Located at the top of the head of the 30S subunit, it contacts several helices of the 16S rRNA. In the 70S ribosome it contacts the 23S rRNA (bridge B1a) and protein L5 of the 50S subunit (bridge B1b), connecting the 2 subunits; these bridges are implicated in subunit movement. Contacts the tRNAs in the A and P-sites.</text>
</comment>
<comment type="subunit">
    <text evidence="1">Part of the 30S ribosomal subunit. Forms a loose heterodimer with protein S19. Forms two bridges to the 50S subunit in the 70S ribosome.</text>
</comment>
<comment type="similarity">
    <text evidence="1">Belongs to the universal ribosomal protein uS13 family.</text>
</comment>
<comment type="sequence caution" evidence="3">
    <conflict type="erroneous initiation">
        <sequence resource="EMBL-CDS" id="ABL83376"/>
    </conflict>
</comment>
<gene>
    <name evidence="1" type="primary">rpsM</name>
    <name type="ordered locus">Noca_3878</name>
</gene>